<accession>Q39234</accession>
<accession>Q8LBG4</accession>
<accession>Q9LM52</accession>
<dbReference type="EMBL" id="L10209">
    <property type="protein sequence ID" value="AAA32873.1"/>
    <property type="molecule type" value="mRNA"/>
</dbReference>
<dbReference type="EMBL" id="AC069252">
    <property type="protein sequence ID" value="AAF86550.1"/>
    <property type="status" value="ALT_SEQ"/>
    <property type="molecule type" value="Genomic_DNA"/>
</dbReference>
<dbReference type="EMBL" id="CP002684">
    <property type="protein sequence ID" value="AEE30193.1"/>
    <property type="molecule type" value="Genomic_DNA"/>
</dbReference>
<dbReference type="EMBL" id="AY087225">
    <property type="protein sequence ID" value="AAM64781.1"/>
    <property type="status" value="ALT_INIT"/>
    <property type="molecule type" value="mRNA"/>
</dbReference>
<dbReference type="PIR" id="F86353">
    <property type="entry name" value="F86353"/>
</dbReference>
<dbReference type="PIR" id="S46523">
    <property type="entry name" value="S46523"/>
</dbReference>
<dbReference type="RefSeq" id="NP_564156.1">
    <property type="nucleotide sequence ID" value="NM_102057.4"/>
</dbReference>
<dbReference type="PDB" id="7TAC">
    <property type="method" value="EM"/>
    <property type="resolution" value="3.60 A"/>
    <property type="chains" value="C/D/E/F=87-384"/>
</dbReference>
<dbReference type="PDB" id="7TAD">
    <property type="method" value="EM"/>
    <property type="resolution" value="3.60 A"/>
    <property type="chains" value="C/D=87-384"/>
</dbReference>
<dbReference type="PDB" id="7TAE">
    <property type="method" value="X-ray"/>
    <property type="resolution" value="1.50 A"/>
    <property type="chains" value="A=161-384"/>
</dbReference>
<dbReference type="PDBsum" id="7TAC"/>
<dbReference type="PDBsum" id="7TAD"/>
<dbReference type="PDBsum" id="7TAE"/>
<dbReference type="EMDB" id="EMD-25769"/>
<dbReference type="EMDB" id="EMD-25771"/>
<dbReference type="SMR" id="Q39234"/>
<dbReference type="BioGRID" id="24051">
    <property type="interactions" value="33"/>
</dbReference>
<dbReference type="FunCoup" id="Q39234">
    <property type="interactions" value="308"/>
</dbReference>
<dbReference type="IntAct" id="Q39234">
    <property type="interactions" value="29"/>
</dbReference>
<dbReference type="STRING" id="3702.Q39234"/>
<dbReference type="iPTMnet" id="Q39234"/>
<dbReference type="PaxDb" id="3702-AT1G22070.1"/>
<dbReference type="ProteomicsDB" id="246472"/>
<dbReference type="EnsemblPlants" id="AT1G22070.1">
    <property type="protein sequence ID" value="AT1G22070.1"/>
    <property type="gene ID" value="AT1G22070"/>
</dbReference>
<dbReference type="GeneID" id="838812"/>
<dbReference type="Gramene" id="AT1G22070.1">
    <property type="protein sequence ID" value="AT1G22070.1"/>
    <property type="gene ID" value="AT1G22070"/>
</dbReference>
<dbReference type="KEGG" id="ath:AT1G22070"/>
<dbReference type="Araport" id="AT1G22070"/>
<dbReference type="TAIR" id="AT1G22070">
    <property type="gene designation" value="TGA3"/>
</dbReference>
<dbReference type="eggNOG" id="ENOG502QS1H">
    <property type="taxonomic scope" value="Eukaryota"/>
</dbReference>
<dbReference type="HOGENOM" id="CLU_024782_1_0_1"/>
<dbReference type="InParanoid" id="Q39234"/>
<dbReference type="OMA" id="ICLNHYA"/>
<dbReference type="PhylomeDB" id="Q39234"/>
<dbReference type="PRO" id="PR:Q39234"/>
<dbReference type="Proteomes" id="UP000006548">
    <property type="component" value="Chromosome 1"/>
</dbReference>
<dbReference type="ExpressionAtlas" id="Q39234">
    <property type="expression patterns" value="baseline and differential"/>
</dbReference>
<dbReference type="GO" id="GO:0005634">
    <property type="term" value="C:nucleus"/>
    <property type="evidence" value="ECO:0000314"/>
    <property type="project" value="TAIR"/>
</dbReference>
<dbReference type="GO" id="GO:0005516">
    <property type="term" value="F:calmodulin binding"/>
    <property type="evidence" value="ECO:0000314"/>
    <property type="project" value="TAIR"/>
</dbReference>
<dbReference type="GO" id="GO:0003700">
    <property type="term" value="F:DNA-binding transcription factor activity"/>
    <property type="evidence" value="ECO:0000314"/>
    <property type="project" value="TAIR"/>
</dbReference>
<dbReference type="GO" id="GO:0000976">
    <property type="term" value="F:transcription cis-regulatory region binding"/>
    <property type="evidence" value="ECO:0000353"/>
    <property type="project" value="TAIR"/>
</dbReference>
<dbReference type="GO" id="GO:0042742">
    <property type="term" value="P:defense response to bacterium"/>
    <property type="evidence" value="ECO:0000315"/>
    <property type="project" value="TAIR"/>
</dbReference>
<dbReference type="GO" id="GO:0006351">
    <property type="term" value="P:DNA-templated transcription"/>
    <property type="evidence" value="ECO:0007669"/>
    <property type="project" value="InterPro"/>
</dbReference>
<dbReference type="GO" id="GO:0009626">
    <property type="term" value="P:plant-type hypersensitive response"/>
    <property type="evidence" value="ECO:0007669"/>
    <property type="project" value="UniProtKB-KW"/>
</dbReference>
<dbReference type="GO" id="GO:0009862">
    <property type="term" value="P:systemic acquired resistance, salicylic acid mediated signaling pathway"/>
    <property type="evidence" value="ECO:0000353"/>
    <property type="project" value="TAIR"/>
</dbReference>
<dbReference type="FunFam" id="1.20.5.170:FF:000019">
    <property type="entry name" value="BZIP family transcription factor"/>
    <property type="match status" value="1"/>
</dbReference>
<dbReference type="Gene3D" id="1.20.5.170">
    <property type="match status" value="1"/>
</dbReference>
<dbReference type="InterPro" id="IPR004827">
    <property type="entry name" value="bZIP"/>
</dbReference>
<dbReference type="InterPro" id="IPR046347">
    <property type="entry name" value="bZIP_sf"/>
</dbReference>
<dbReference type="InterPro" id="IPR025422">
    <property type="entry name" value="TGA_domain"/>
</dbReference>
<dbReference type="PANTHER" id="PTHR45693:SF32">
    <property type="entry name" value="TRANSCRIPTION FACTOR TGA3"/>
    <property type="match status" value="1"/>
</dbReference>
<dbReference type="PANTHER" id="PTHR45693">
    <property type="entry name" value="TRANSCRIPTION FACTOR TGA9"/>
    <property type="match status" value="1"/>
</dbReference>
<dbReference type="Pfam" id="PF07716">
    <property type="entry name" value="bZIP_2"/>
    <property type="match status" value="1"/>
</dbReference>
<dbReference type="Pfam" id="PF14144">
    <property type="entry name" value="DOG1"/>
    <property type="match status" value="1"/>
</dbReference>
<dbReference type="SMART" id="SM00338">
    <property type="entry name" value="BRLZ"/>
    <property type="match status" value="1"/>
</dbReference>
<dbReference type="SUPFAM" id="SSF57959">
    <property type="entry name" value="Leucine zipper domain"/>
    <property type="match status" value="1"/>
</dbReference>
<dbReference type="PROSITE" id="PS50217">
    <property type="entry name" value="BZIP"/>
    <property type="match status" value="1"/>
</dbReference>
<dbReference type="PROSITE" id="PS00036">
    <property type="entry name" value="BZIP_BASIC"/>
    <property type="match status" value="1"/>
</dbReference>
<dbReference type="PROSITE" id="PS51806">
    <property type="entry name" value="DOG1"/>
    <property type="match status" value="1"/>
</dbReference>
<feature type="chain" id="PRO_0000076555" description="Transcription factor TGA3">
    <location>
        <begin position="1"/>
        <end position="384"/>
    </location>
</feature>
<feature type="domain" description="bZIP" evidence="3">
    <location>
        <begin position="96"/>
        <end position="138"/>
    </location>
</feature>
<feature type="domain" description="DOG1" evidence="4">
    <location>
        <begin position="167"/>
        <end position="379"/>
    </location>
</feature>
<feature type="region of interest" description="Disordered" evidence="5">
    <location>
        <begin position="36"/>
        <end position="70"/>
    </location>
</feature>
<feature type="region of interest" description="Disordered" evidence="5">
    <location>
        <begin position="76"/>
        <end position="95"/>
    </location>
</feature>
<feature type="region of interest" description="Basic motif" evidence="3">
    <location>
        <begin position="98"/>
        <end position="118"/>
    </location>
</feature>
<feature type="region of interest" description="Leucine-zipper" evidence="3">
    <location>
        <begin position="124"/>
        <end position="138"/>
    </location>
</feature>
<feature type="coiled-coil region" evidence="1">
    <location>
        <begin position="117"/>
        <end position="144"/>
    </location>
</feature>
<feature type="coiled-coil region" evidence="1">
    <location>
        <begin position="267"/>
        <end position="296"/>
    </location>
</feature>
<feature type="short sequence motif" description="Nuclear localization signal" evidence="2">
    <location>
        <begin position="99"/>
        <end position="106"/>
    </location>
</feature>
<feature type="compositionally biased region" description="Low complexity" evidence="5">
    <location>
        <begin position="39"/>
        <end position="55"/>
    </location>
</feature>
<feature type="compositionally biased region" description="Basic and acidic residues" evidence="5">
    <location>
        <begin position="58"/>
        <end position="68"/>
    </location>
</feature>
<feature type="compositionally biased region" description="Polar residues" evidence="5">
    <location>
        <begin position="76"/>
        <end position="88"/>
    </location>
</feature>
<feature type="binding site" evidence="12 22">
    <location>
        <position position="219"/>
    </location>
    <ligand>
        <name>hexadecanoate</name>
        <dbReference type="ChEBI" id="CHEBI:7896"/>
    </ligand>
</feature>
<feature type="binding site" evidence="12 22">
    <location>
        <position position="236"/>
    </location>
    <ligand>
        <name>hexadecanoate</name>
        <dbReference type="ChEBI" id="CHEBI:7896"/>
    </ligand>
</feature>
<feature type="binding site" evidence="12 22">
    <location>
        <position position="249"/>
    </location>
    <ligand>
        <name>hexadecanoate</name>
        <dbReference type="ChEBI" id="CHEBI:7896"/>
    </ligand>
</feature>
<feature type="sequence conflict" description="In Ref. 4; AAM64781." evidence="17" ref="4">
    <original>V</original>
    <variation>F</variation>
    <location>
        <position position="58"/>
    </location>
</feature>
<feature type="helix" evidence="23">
    <location>
        <begin position="167"/>
        <end position="193"/>
    </location>
</feature>
<feature type="helix" evidence="23">
    <location>
        <begin position="198"/>
        <end position="225"/>
    </location>
</feature>
<feature type="helix" evidence="23">
    <location>
        <begin position="227"/>
        <end position="232"/>
    </location>
</feature>
<feature type="turn" evidence="23">
    <location>
        <begin position="233"/>
        <end position="235"/>
    </location>
</feature>
<feature type="helix" evidence="23">
    <location>
        <begin position="238"/>
        <end position="241"/>
    </location>
</feature>
<feature type="helix" evidence="23">
    <location>
        <begin position="251"/>
        <end position="262"/>
    </location>
</feature>
<feature type="helix" evidence="23">
    <location>
        <begin position="267"/>
        <end position="304"/>
    </location>
</feature>
<feature type="helix" evidence="23">
    <location>
        <begin position="316"/>
        <end position="349"/>
    </location>
</feature>
<feature type="helix" evidence="23">
    <location>
        <begin position="352"/>
        <end position="376"/>
    </location>
</feature>
<comment type="function">
    <text evidence="7 11">Transcriptional activator that binds specifically to the DNA sequence 5'-TGACG-3' (PubMed:12897257). Recognizes ocs elements like the as-1 motif of the cauliflower mosaic virus 35S promoter (PubMed:12897257). Binding to the as-1-like cis elements mediate auxin- and salicylic acid-inducible transcription (PubMed:12897257). Required to induce the systemic acquired resistance (SAR) via the regulation of pathogenesis-related genes expression (PubMed:12897257). Binding to the as-1 element of PR-1 promoter is salicylic acid-inducible and mediated by sumoylated NPR1 (PubMed:12897257, PubMed:26269953). Could also bind to the Hex-motif (5'-TGACGTGG-3') another cis-acting element found in plant histone promoters (PubMed:12897257).</text>
</comment>
<comment type="subunit">
    <text evidence="6 8 9 10 12">Binds DNA as a dimer (PubMed:35545668). Interacts with NPR3, NPR4 and sumoylated NPR1 (PubMed:35545668). Interacts with GRXC7/ROXY1.</text>
</comment>
<comment type="interaction">
    <interactant intactId="EBI-541366">
        <id>Q39234</id>
    </interactant>
    <interactant intactId="EBI-15192535">
        <id>F4JI72</id>
        <label>At4g03250</label>
    </interactant>
    <organismsDiffer>false</organismsDiffer>
    <experiments>3</experiments>
</comment>
<comment type="interaction">
    <interactant intactId="EBI-541366">
        <id>Q39234</id>
    </interactant>
    <interactant intactId="EBI-25519661">
        <id>Q9SZ75</id>
        <label>At4g12100</label>
    </interactant>
    <organismsDiffer>false</organismsDiffer>
    <experiments>3</experiments>
</comment>
<comment type="interaction">
    <interactant intactId="EBI-541366">
        <id>Q39234</id>
    </interactant>
    <interactant intactId="EBI-21138980">
        <id>Q8VYP6</id>
        <label>At5g11010</label>
    </interactant>
    <organismsDiffer>false</organismsDiffer>
    <experiments>3</experiments>
</comment>
<comment type="interaction">
    <interactant intactId="EBI-541366">
        <id>Q39234</id>
    </interactant>
    <interactant intactId="EBI-25521470">
        <id>Q94K68</id>
        <label>At5g27560</label>
    </interactant>
    <organismsDiffer>false</organismsDiffer>
    <experiments>3</experiments>
</comment>
<comment type="interaction">
    <interactant intactId="EBI-541366">
        <id>Q39234</id>
    </interactant>
    <interactant intactId="EBI-4469161">
        <id>Q9LT56</id>
        <label>ATN1</label>
    </interactant>
    <organismsDiffer>false</organismsDiffer>
    <experiments>3</experiments>
</comment>
<comment type="interaction">
    <interactant intactId="EBI-541366">
        <id>Q39234</id>
    </interactant>
    <interactant intactId="EBI-4428219">
        <id>P0DO23</id>
        <label>CP2</label>
    </interactant>
    <organismsDiffer>false</organismsDiffer>
    <experiments>3</experiments>
</comment>
<comment type="interaction">
    <interactant intactId="EBI-541366">
        <id>Q39234</id>
    </interactant>
    <interactant intactId="EBI-2257898">
        <id>Q96305</id>
        <label>GRXC7</label>
    </interactant>
    <organismsDiffer>false</organismsDiffer>
    <experiments>6</experiments>
</comment>
<comment type="interaction">
    <interactant intactId="EBI-541366">
        <id>Q39234</id>
    </interactant>
    <interactant intactId="EBI-1545762">
        <id>Q9SGP6</id>
        <label>GRXC9</label>
    </interactant>
    <organismsDiffer>false</organismsDiffer>
    <experiments>3</experiments>
</comment>
<comment type="interaction">
    <interactant intactId="EBI-541366">
        <id>Q39234</id>
    </interactant>
    <interactant intactId="EBI-25521272">
        <id>Q6NLU2</id>
        <label>GRXS7</label>
    </interactant>
    <organismsDiffer>false</organismsDiffer>
    <experiments>3</experiments>
</comment>
<comment type="interaction">
    <interactant intactId="EBI-541366">
        <id>Q39234</id>
    </interactant>
    <interactant intactId="EBI-4450582">
        <id>O04341</id>
        <label>GRXS9</label>
    </interactant>
    <organismsDiffer>false</organismsDiffer>
    <experiments>4</experiments>
</comment>
<comment type="interaction">
    <interactant intactId="EBI-541366">
        <id>Q39234</id>
    </interactant>
    <interactant intactId="EBI-15193025">
        <id>Q9LXU1</id>
        <label>NOT9B</label>
    </interactant>
    <organismsDiffer>false</organismsDiffer>
    <experiments>3</experiments>
</comment>
<comment type="interaction">
    <interactant intactId="EBI-541366">
        <id>Q39234</id>
    </interactant>
    <interactant intactId="EBI-1392127">
        <id>P93002</id>
        <label>NPR1</label>
    </interactant>
    <organismsDiffer>false</organismsDiffer>
    <experiments>9</experiments>
</comment>
<comment type="interaction">
    <interactant intactId="EBI-541366">
        <id>Q39234</id>
    </interactant>
    <interactant intactId="EBI-4441365">
        <id>Q8L746</id>
        <label>NPR3</label>
    </interactant>
    <organismsDiffer>false</organismsDiffer>
    <experiments>6</experiments>
</comment>
<comment type="interaction">
    <interactant intactId="EBI-541366">
        <id>Q39234</id>
    </interactant>
    <interactant intactId="EBI-541307">
        <id>P43273</id>
        <label>TGA2</label>
    </interactant>
    <organismsDiffer>false</organismsDiffer>
    <experiments>3</experiments>
</comment>
<comment type="interaction">
    <interactant intactId="EBI-541366">
        <id>Q39234</id>
    </interactant>
    <interactant intactId="EBI-541381">
        <id>Q39163</id>
        <label>TGA5</label>
    </interactant>
    <organismsDiffer>false</organismsDiffer>
    <experiments>7</experiments>
</comment>
<comment type="interaction">
    <interactant intactId="EBI-541366">
        <id>Q39234</id>
    </interactant>
    <interactant intactId="EBI-541321">
        <id>Q39140</id>
        <label>TGA6</label>
    </interactant>
    <organismsDiffer>false</organismsDiffer>
    <experiments>3</experiments>
</comment>
<comment type="subcellular location">
    <subcellularLocation>
        <location evidence="2 3">Nucleus</location>
    </subcellularLocation>
</comment>
<comment type="tissue specificity">
    <text evidence="13 14">Expressed in the whole plant.</text>
</comment>
<comment type="similarity">
    <text evidence="17">Belongs to the bZIP family.</text>
</comment>
<comment type="sequence caution" evidence="17">
    <conflict type="erroneous gene model prediction">
        <sequence resource="EMBL-CDS" id="AAF86550"/>
    </conflict>
</comment>
<comment type="sequence caution" evidence="17">
    <conflict type="erroneous initiation">
        <sequence resource="EMBL-CDS" id="AAM64781"/>
    </conflict>
    <text>Truncated N-terminus.</text>
</comment>
<proteinExistence type="evidence at protein level"/>
<organism>
    <name type="scientific">Arabidopsis thaliana</name>
    <name type="common">Mouse-ear cress</name>
    <dbReference type="NCBI Taxonomy" id="3702"/>
    <lineage>
        <taxon>Eukaryota</taxon>
        <taxon>Viridiplantae</taxon>
        <taxon>Streptophyta</taxon>
        <taxon>Embryophyta</taxon>
        <taxon>Tracheophyta</taxon>
        <taxon>Spermatophyta</taxon>
        <taxon>Magnoliopsida</taxon>
        <taxon>eudicotyledons</taxon>
        <taxon>Gunneridae</taxon>
        <taxon>Pentapetalae</taxon>
        <taxon>rosids</taxon>
        <taxon>malvids</taxon>
        <taxon>Brassicales</taxon>
        <taxon>Brassicaceae</taxon>
        <taxon>Camelineae</taxon>
        <taxon>Arabidopsis</taxon>
    </lineage>
</organism>
<sequence>MEMMSSSSSTTQVVSFRDMGMYEPFQQLSGWESPFKSDINNITSNQNNNQSSSTTLEVDARPEADDNNRVNYTSVYNNSLEAEPSSNNDQDEDRINDKMKRRLAQNREAARKSRLRKKAHVQQLEESRLKLSQLEQELVRARQQGLCVRNSSDTSYLGPAGNMNSGIAAFEMEYTHWLEEQNRRVSEIRTALQAHIGDIELKMLVDSCLNHYANLFRMKADAAKADVFFLMSGMWRTSTERFFQWIGGFRPSELLNVVMPYVEPLTDQQLLEVRNLQQSSQQAEEALSQGLDKLQQGLVESIAIQIKVVESVNHGAPMASAMENLQALESFVNQADHLRQQTLQQMSKILTTRQAARGLLALGEYFHRLRALSSLWAARPREHT</sequence>
<evidence type="ECO:0000255" key="1"/>
<evidence type="ECO:0000255" key="2">
    <source>
        <dbReference type="PROSITE-ProRule" id="PRU00768"/>
    </source>
</evidence>
<evidence type="ECO:0000255" key="3">
    <source>
        <dbReference type="PROSITE-ProRule" id="PRU00978"/>
    </source>
</evidence>
<evidence type="ECO:0000255" key="4">
    <source>
        <dbReference type="PROSITE-ProRule" id="PRU01147"/>
    </source>
</evidence>
<evidence type="ECO:0000256" key="5">
    <source>
        <dbReference type="SAM" id="MobiDB-lite"/>
    </source>
</evidence>
<evidence type="ECO:0000269" key="6">
    <source>
    </source>
</evidence>
<evidence type="ECO:0000269" key="7">
    <source>
    </source>
</evidence>
<evidence type="ECO:0000269" key="8">
    <source>
    </source>
</evidence>
<evidence type="ECO:0000269" key="9">
    <source>
    </source>
</evidence>
<evidence type="ECO:0000269" key="10">
    <source>
    </source>
</evidence>
<evidence type="ECO:0000269" key="11">
    <source>
    </source>
</evidence>
<evidence type="ECO:0000269" key="12">
    <source>
    </source>
</evidence>
<evidence type="ECO:0000269" key="13">
    <source>
    </source>
</evidence>
<evidence type="ECO:0000269" key="14">
    <source>
    </source>
</evidence>
<evidence type="ECO:0000303" key="15">
    <source>
    </source>
</evidence>
<evidence type="ECO:0000303" key="16">
    <source>
    </source>
</evidence>
<evidence type="ECO:0000305" key="17"/>
<evidence type="ECO:0000312" key="18">
    <source>
        <dbReference type="Araport" id="AT1G22070"/>
    </source>
</evidence>
<evidence type="ECO:0000312" key="19">
    <source>
        <dbReference type="EMBL" id="AAF86550.1"/>
    </source>
</evidence>
<evidence type="ECO:0007744" key="20">
    <source>
        <dbReference type="PDB" id="7TAC"/>
    </source>
</evidence>
<evidence type="ECO:0007744" key="21">
    <source>
        <dbReference type="PDB" id="7TAD"/>
    </source>
</evidence>
<evidence type="ECO:0007744" key="22">
    <source>
        <dbReference type="PDB" id="7TAE"/>
    </source>
</evidence>
<evidence type="ECO:0007829" key="23">
    <source>
        <dbReference type="PDB" id="7TAE"/>
    </source>
</evidence>
<reference key="1">
    <citation type="journal article" date="1994" name="Plant Mol. Biol.">
        <title>TGA3 is a distinct member of the TGA family of bZIP transcription factors in Arabidopsis thaliana.</title>
        <authorList>
            <person name="Miao Z.-H."/>
            <person name="Liu X."/>
            <person name="Lam E."/>
        </authorList>
    </citation>
    <scope>NUCLEOTIDE SEQUENCE [MRNA]</scope>
    <scope>TISSUE SPECIFICITY</scope>
    <source>
        <strain>cv. Columbia</strain>
    </source>
</reference>
<reference key="2">
    <citation type="journal article" date="2000" name="Nature">
        <title>Sequence and analysis of chromosome 1 of the plant Arabidopsis thaliana.</title>
        <authorList>
            <person name="Theologis A."/>
            <person name="Ecker J.R."/>
            <person name="Palm C.J."/>
            <person name="Federspiel N.A."/>
            <person name="Kaul S."/>
            <person name="White O."/>
            <person name="Alonso J."/>
            <person name="Altafi H."/>
            <person name="Araujo R."/>
            <person name="Bowman C.L."/>
            <person name="Brooks S.Y."/>
            <person name="Buehler E."/>
            <person name="Chan A."/>
            <person name="Chao Q."/>
            <person name="Chen H."/>
            <person name="Cheuk R.F."/>
            <person name="Chin C.W."/>
            <person name="Chung M.K."/>
            <person name="Conn L."/>
            <person name="Conway A.B."/>
            <person name="Conway A.R."/>
            <person name="Creasy T.H."/>
            <person name="Dewar K."/>
            <person name="Dunn P."/>
            <person name="Etgu P."/>
            <person name="Feldblyum T.V."/>
            <person name="Feng J.-D."/>
            <person name="Fong B."/>
            <person name="Fujii C.Y."/>
            <person name="Gill J.E."/>
            <person name="Goldsmith A.D."/>
            <person name="Haas B."/>
            <person name="Hansen N.F."/>
            <person name="Hughes B."/>
            <person name="Huizar L."/>
            <person name="Hunter J.L."/>
            <person name="Jenkins J."/>
            <person name="Johnson-Hopson C."/>
            <person name="Khan S."/>
            <person name="Khaykin E."/>
            <person name="Kim C.J."/>
            <person name="Koo H.L."/>
            <person name="Kremenetskaia I."/>
            <person name="Kurtz D.B."/>
            <person name="Kwan A."/>
            <person name="Lam B."/>
            <person name="Langin-Hooper S."/>
            <person name="Lee A."/>
            <person name="Lee J.M."/>
            <person name="Lenz C.A."/>
            <person name="Li J.H."/>
            <person name="Li Y.-P."/>
            <person name="Lin X."/>
            <person name="Liu S.X."/>
            <person name="Liu Z.A."/>
            <person name="Luros J.S."/>
            <person name="Maiti R."/>
            <person name="Marziali A."/>
            <person name="Militscher J."/>
            <person name="Miranda M."/>
            <person name="Nguyen M."/>
            <person name="Nierman W.C."/>
            <person name="Osborne B.I."/>
            <person name="Pai G."/>
            <person name="Peterson J."/>
            <person name="Pham P.K."/>
            <person name="Rizzo M."/>
            <person name="Rooney T."/>
            <person name="Rowley D."/>
            <person name="Sakano H."/>
            <person name="Salzberg S.L."/>
            <person name="Schwartz J.R."/>
            <person name="Shinn P."/>
            <person name="Southwick A.M."/>
            <person name="Sun H."/>
            <person name="Tallon L.J."/>
            <person name="Tambunga G."/>
            <person name="Toriumi M.J."/>
            <person name="Town C.D."/>
            <person name="Utterback T."/>
            <person name="Van Aken S."/>
            <person name="Vaysberg M."/>
            <person name="Vysotskaia V.S."/>
            <person name="Walker M."/>
            <person name="Wu D."/>
            <person name="Yu G."/>
            <person name="Fraser C.M."/>
            <person name="Venter J.C."/>
            <person name="Davis R.W."/>
        </authorList>
    </citation>
    <scope>NUCLEOTIDE SEQUENCE [LARGE SCALE GENOMIC DNA]</scope>
    <source>
        <strain>cv. Columbia</strain>
    </source>
</reference>
<reference key="3">
    <citation type="journal article" date="2017" name="Plant J.">
        <title>Araport11: a complete reannotation of the Arabidopsis thaliana reference genome.</title>
        <authorList>
            <person name="Cheng C.Y."/>
            <person name="Krishnakumar V."/>
            <person name="Chan A.P."/>
            <person name="Thibaud-Nissen F."/>
            <person name="Schobel S."/>
            <person name="Town C.D."/>
        </authorList>
    </citation>
    <scope>GENOME REANNOTATION</scope>
    <source>
        <strain>cv. Columbia</strain>
    </source>
</reference>
<reference key="4">
    <citation type="submission" date="2002-03" db="EMBL/GenBank/DDBJ databases">
        <title>Full-length cDNA from Arabidopsis thaliana.</title>
        <authorList>
            <person name="Brover V.V."/>
            <person name="Troukhan M.E."/>
            <person name="Alexandrov N.A."/>
            <person name="Lu Y.-P."/>
            <person name="Flavell R.B."/>
            <person name="Feldmann K.A."/>
        </authorList>
    </citation>
    <scope>NUCLEOTIDE SEQUENCE [LARGE SCALE MRNA]</scope>
</reference>
<reference key="5">
    <citation type="journal article" date="1995" name="Nucleic Acids Res.">
        <title>Binding site requirements and differential representation of TGF factors in nuclear ASF-1 activity.</title>
        <authorList>
            <person name="Lam E."/>
            <person name="Lam Y.K."/>
        </authorList>
    </citation>
    <scope>DNA-BINDING</scope>
</reference>
<reference key="6">
    <citation type="journal article" date="1996" name="Mol. Gen. Genet.">
        <title>Binding specificity and tissue-specific expression pattern of the Arabidopsis bZIP transcription factor TGA2.</title>
        <authorList>
            <person name="de Pater S."/>
            <person name="Pham K."/>
            <person name="Memelink J."/>
            <person name="Kijne J."/>
        </authorList>
    </citation>
    <scope>TISSUE SPECIFICITY</scope>
</reference>
<reference key="7">
    <citation type="journal article" date="2000" name="Mol. Plant Microbe Interact.">
        <title>NPR1 differentially interacts with members of the TGA/OBF family of transcription factors that bind an element of the PR-1 gene required for induction by salicylic acid.</title>
        <authorList>
            <person name="Zhou J.-M."/>
            <person name="Trifa Y."/>
            <person name="Silva H."/>
            <person name="Pontier D."/>
            <person name="Lam E."/>
            <person name="Shah J."/>
            <person name="Klessig D.F."/>
        </authorList>
    </citation>
    <scope>INTERACTION WITH NPR1</scope>
</reference>
<reference key="8">
    <citation type="journal article" date="2002" name="Trends Plant Sci.">
        <title>bZIP transcription factors in Arabidopsis.</title>
        <authorList>
            <person name="Jakoby M."/>
            <person name="Weisshaar B."/>
            <person name="Droege-Laser W."/>
            <person name="Vicente-Carbajosa J."/>
            <person name="Tiedemann J."/>
            <person name="Kroj T."/>
            <person name="Parcy F."/>
        </authorList>
    </citation>
    <scope>GENE FAMILY</scope>
    <scope>NOMENCLATURE</scope>
</reference>
<reference key="9">
    <citation type="journal article" date="2003" name="Plant Cell">
        <title>Salicylic acid and NPR1 induce the recruitment of trans-activating TGA factors to a defense gene promoter in Arabidopsis.</title>
        <authorList>
            <person name="Johnson C."/>
            <person name="Boden E."/>
            <person name="Arias J."/>
        </authorList>
    </citation>
    <scope>FUNCTION</scope>
</reference>
<reference key="10">
    <citation type="journal article" date="2005" name="Plant J.">
        <title>An Arabidopsis NPR1-like gene, NPR4, is required for disease resistance.</title>
        <authorList>
            <person name="Liu G."/>
            <person name="Holub E.B."/>
            <person name="Alonso J.M."/>
            <person name="Ecker J.R."/>
            <person name="Fobert P.R."/>
        </authorList>
    </citation>
    <scope>INTERACTION WITH NPR1 AND NPR4</scope>
</reference>
<reference key="11">
    <citation type="journal article" date="2006" name="Plant J.">
        <title>Negative regulation of defense responses in Arabidopsis by two NPR1 paralogs.</title>
        <authorList>
            <person name="Zhang Y."/>
            <person name="Cheng Y.T."/>
            <person name="Qu N."/>
            <person name="Zhao Q."/>
            <person name="Bi D."/>
            <person name="Li X."/>
        </authorList>
    </citation>
    <scope>INTERACTION WITH NPR3 AND NPR4</scope>
</reference>
<reference key="12">
    <citation type="journal article" date="2009" name="Plant Cell">
        <title>Nuclear activity of ROXY1, a glutaredoxin interacting with TGA factors, is required for petal development in Arabidopsis thaliana.</title>
        <authorList>
            <person name="Li S."/>
            <person name="Lauri A."/>
            <person name="Ziemann M."/>
            <person name="Busch A."/>
            <person name="Bhave M."/>
            <person name="Zachgo S."/>
        </authorList>
    </citation>
    <scope>INTERACTION WITH GRXC7/ROXY1</scope>
</reference>
<reference key="13">
    <citation type="journal article" date="2015" name="Cell Host Microbe">
        <title>Posttranslational modifications of the master transcriptional regulator NPR1 enable dynamic but tight control of plant immune responses.</title>
        <authorList>
            <person name="Saleh A."/>
            <person name="Withers J."/>
            <person name="Mohan R."/>
            <person name="Marques J."/>
            <person name="Gu Y."/>
            <person name="Yan S."/>
            <person name="Zavaliev R."/>
            <person name="Nomoto M."/>
            <person name="Tada Y."/>
            <person name="Dong X."/>
        </authorList>
    </citation>
    <scope>FUNCTION</scope>
    <scope>INTERACTION WITH NPR1</scope>
    <source>
        <strain>cv. Columbia</strain>
    </source>
</reference>
<reference evidence="20 21 22" key="14">
    <citation type="journal article" date="2022" name="Nature">
        <title>Structural basis of NPR1 in activating plant immunity.</title>
        <authorList>
            <person name="Kumar S."/>
            <person name="Zavaliev R."/>
            <person name="Wu Q."/>
            <person name="Zhou Y."/>
            <person name="Cheng J."/>
            <person name="Dillard L."/>
            <person name="Powers J."/>
            <person name="Withers J."/>
            <person name="Zhao J."/>
            <person name="Guan Z."/>
            <person name="Borgnia M.J."/>
            <person name="Bartesaghi A."/>
            <person name="Dong X."/>
            <person name="Zhou P."/>
        </authorList>
    </citation>
    <scope>X-RAY CRYSTALLOGRAPHY (1.50 ANGSTROMS) OF 161-384 IN COMPLEX WITH HEXADECANOATE AND NPR1 IN THE PRESENCE OF DNA</scope>
    <scope>INTERACTION WITH NPR1</scope>
</reference>
<keyword id="KW-0002">3D-structure</keyword>
<keyword id="KW-0010">Activator</keyword>
<keyword id="KW-0175">Coiled coil</keyword>
<keyword id="KW-0238">DNA-binding</keyword>
<keyword id="KW-0381">Hypersensitive response</keyword>
<keyword id="KW-0539">Nucleus</keyword>
<keyword id="KW-0611">Plant defense</keyword>
<keyword id="KW-1185">Reference proteome</keyword>
<keyword id="KW-0804">Transcription</keyword>
<keyword id="KW-0805">Transcription regulation</keyword>
<name>TGA3_ARATH</name>
<protein>
    <recommendedName>
        <fullName evidence="16">Transcription factor TGA3</fullName>
    </recommendedName>
    <alternativeName>
        <fullName evidence="15">bZIP transcription factor 22</fullName>
        <shortName evidence="15">AtbZIP22</shortName>
    </alternativeName>
</protein>
<gene>
    <name evidence="16" type="primary">TGA3</name>
    <name evidence="15" type="synonym">BZIP22</name>
    <name evidence="18" type="ordered locus">At1g22070</name>
    <name evidence="19" type="ORF">F2E2.14</name>
</gene>